<accession>Q5LIY5</accession>
<protein>
    <recommendedName>
        <fullName evidence="1">tRNA uridine 5-carboxymethylaminomethyl modification enzyme MnmG</fullName>
    </recommendedName>
    <alternativeName>
        <fullName evidence="1">Glucose-inhibited division protein A</fullName>
    </alternativeName>
</protein>
<dbReference type="EMBL" id="CR626927">
    <property type="protein sequence ID" value="CAH05891.1"/>
    <property type="molecule type" value="Genomic_DNA"/>
</dbReference>
<dbReference type="RefSeq" id="WP_005801979.1">
    <property type="nucleotide sequence ID" value="NZ_UFTH01000001.1"/>
</dbReference>
<dbReference type="SMR" id="Q5LIY5"/>
<dbReference type="PaxDb" id="272559-BF9343_0112"/>
<dbReference type="GeneID" id="60368245"/>
<dbReference type="KEGG" id="bfs:BF9343_0112"/>
<dbReference type="eggNOG" id="COG0445">
    <property type="taxonomic scope" value="Bacteria"/>
</dbReference>
<dbReference type="HOGENOM" id="CLU_007831_2_2_10"/>
<dbReference type="Proteomes" id="UP000006731">
    <property type="component" value="Chromosome"/>
</dbReference>
<dbReference type="GO" id="GO:0005829">
    <property type="term" value="C:cytosol"/>
    <property type="evidence" value="ECO:0007669"/>
    <property type="project" value="TreeGrafter"/>
</dbReference>
<dbReference type="GO" id="GO:0050660">
    <property type="term" value="F:flavin adenine dinucleotide binding"/>
    <property type="evidence" value="ECO:0007669"/>
    <property type="project" value="UniProtKB-UniRule"/>
</dbReference>
<dbReference type="GO" id="GO:0030488">
    <property type="term" value="P:tRNA methylation"/>
    <property type="evidence" value="ECO:0007669"/>
    <property type="project" value="TreeGrafter"/>
</dbReference>
<dbReference type="GO" id="GO:0002098">
    <property type="term" value="P:tRNA wobble uridine modification"/>
    <property type="evidence" value="ECO:0007669"/>
    <property type="project" value="InterPro"/>
</dbReference>
<dbReference type="FunFam" id="1.10.10.1800:FF:000003">
    <property type="entry name" value="tRNA uridine 5-carboxymethylaminomethyl modification enzyme MnmG"/>
    <property type="match status" value="1"/>
</dbReference>
<dbReference type="FunFam" id="1.10.150.570:FF:000001">
    <property type="entry name" value="tRNA uridine 5-carboxymethylaminomethyl modification enzyme MnmG"/>
    <property type="match status" value="1"/>
</dbReference>
<dbReference type="FunFam" id="3.50.50.60:FF:000002">
    <property type="entry name" value="tRNA uridine 5-carboxymethylaminomethyl modification enzyme MnmG"/>
    <property type="match status" value="1"/>
</dbReference>
<dbReference type="FunFam" id="3.50.50.60:FF:000010">
    <property type="entry name" value="tRNA uridine 5-carboxymethylaminomethyl modification enzyme MnmG"/>
    <property type="match status" value="1"/>
</dbReference>
<dbReference type="Gene3D" id="3.50.50.60">
    <property type="entry name" value="FAD/NAD(P)-binding domain"/>
    <property type="match status" value="2"/>
</dbReference>
<dbReference type="Gene3D" id="1.10.150.570">
    <property type="entry name" value="GidA associated domain, C-terminal subdomain"/>
    <property type="match status" value="1"/>
</dbReference>
<dbReference type="Gene3D" id="1.10.10.1800">
    <property type="entry name" value="tRNA uridine 5-carboxymethylaminomethyl modification enzyme MnmG/GidA"/>
    <property type="match status" value="1"/>
</dbReference>
<dbReference type="HAMAP" id="MF_00129">
    <property type="entry name" value="MnmG_GidA"/>
    <property type="match status" value="1"/>
</dbReference>
<dbReference type="InterPro" id="IPR036188">
    <property type="entry name" value="FAD/NAD-bd_sf"/>
</dbReference>
<dbReference type="InterPro" id="IPR049312">
    <property type="entry name" value="GIDA_C_N"/>
</dbReference>
<dbReference type="InterPro" id="IPR004416">
    <property type="entry name" value="MnmG"/>
</dbReference>
<dbReference type="InterPro" id="IPR002218">
    <property type="entry name" value="MnmG-rel"/>
</dbReference>
<dbReference type="InterPro" id="IPR020595">
    <property type="entry name" value="MnmG-rel_CS"/>
</dbReference>
<dbReference type="InterPro" id="IPR026904">
    <property type="entry name" value="MnmG_C"/>
</dbReference>
<dbReference type="InterPro" id="IPR047001">
    <property type="entry name" value="MnmG_C_subdom"/>
</dbReference>
<dbReference type="InterPro" id="IPR044920">
    <property type="entry name" value="MnmG_C_subdom_sf"/>
</dbReference>
<dbReference type="InterPro" id="IPR040131">
    <property type="entry name" value="MnmG_N"/>
</dbReference>
<dbReference type="NCBIfam" id="TIGR00136">
    <property type="entry name" value="mnmG_gidA"/>
    <property type="match status" value="1"/>
</dbReference>
<dbReference type="PANTHER" id="PTHR11806">
    <property type="entry name" value="GLUCOSE INHIBITED DIVISION PROTEIN A"/>
    <property type="match status" value="1"/>
</dbReference>
<dbReference type="PANTHER" id="PTHR11806:SF0">
    <property type="entry name" value="PROTEIN MTO1 HOMOLOG, MITOCHONDRIAL"/>
    <property type="match status" value="1"/>
</dbReference>
<dbReference type="Pfam" id="PF01134">
    <property type="entry name" value="GIDA"/>
    <property type="match status" value="1"/>
</dbReference>
<dbReference type="Pfam" id="PF21680">
    <property type="entry name" value="GIDA_C_1st"/>
    <property type="match status" value="1"/>
</dbReference>
<dbReference type="Pfam" id="PF13932">
    <property type="entry name" value="SAM_GIDA_C"/>
    <property type="match status" value="1"/>
</dbReference>
<dbReference type="SMART" id="SM01228">
    <property type="entry name" value="GIDA_assoc_3"/>
    <property type="match status" value="1"/>
</dbReference>
<dbReference type="SUPFAM" id="SSF51905">
    <property type="entry name" value="FAD/NAD(P)-binding domain"/>
    <property type="match status" value="1"/>
</dbReference>
<dbReference type="PROSITE" id="PS01280">
    <property type="entry name" value="GIDA_1"/>
    <property type="match status" value="1"/>
</dbReference>
<dbReference type="PROSITE" id="PS01281">
    <property type="entry name" value="GIDA_2"/>
    <property type="match status" value="1"/>
</dbReference>
<comment type="function">
    <text evidence="1">NAD-binding protein involved in the addition of a carboxymethylaminomethyl (cmnm) group at the wobble position (U34) of certain tRNAs, forming tRNA-cmnm(5)s(2)U34.</text>
</comment>
<comment type="cofactor">
    <cofactor evidence="1">
        <name>FAD</name>
        <dbReference type="ChEBI" id="CHEBI:57692"/>
    </cofactor>
</comment>
<comment type="subunit">
    <text evidence="1">Homodimer. Heterotetramer of two MnmE and two MnmG subunits.</text>
</comment>
<comment type="subcellular location">
    <subcellularLocation>
        <location evidence="1">Cytoplasm</location>
    </subcellularLocation>
</comment>
<comment type="similarity">
    <text evidence="1">Belongs to the MnmG family.</text>
</comment>
<keyword id="KW-0963">Cytoplasm</keyword>
<keyword id="KW-0274">FAD</keyword>
<keyword id="KW-0285">Flavoprotein</keyword>
<keyword id="KW-0520">NAD</keyword>
<keyword id="KW-0819">tRNA processing</keyword>
<organism>
    <name type="scientific">Bacteroides fragilis (strain ATCC 25285 / DSM 2151 / CCUG 4856 / JCM 11019 / LMG 10263 / NCTC 9343 / Onslow / VPI 2553 / EN-2)</name>
    <dbReference type="NCBI Taxonomy" id="272559"/>
    <lineage>
        <taxon>Bacteria</taxon>
        <taxon>Pseudomonadati</taxon>
        <taxon>Bacteroidota</taxon>
        <taxon>Bacteroidia</taxon>
        <taxon>Bacteroidales</taxon>
        <taxon>Bacteroidaceae</taxon>
        <taxon>Bacteroides</taxon>
    </lineage>
</organism>
<feature type="chain" id="PRO_0000117057" description="tRNA uridine 5-carboxymethylaminomethyl modification enzyme MnmG">
    <location>
        <begin position="1"/>
        <end position="625"/>
    </location>
</feature>
<feature type="binding site" evidence="1">
    <location>
        <begin position="11"/>
        <end position="16"/>
    </location>
    <ligand>
        <name>FAD</name>
        <dbReference type="ChEBI" id="CHEBI:57692"/>
    </ligand>
</feature>
<feature type="binding site" evidence="1">
    <location>
        <position position="123"/>
    </location>
    <ligand>
        <name>FAD</name>
        <dbReference type="ChEBI" id="CHEBI:57692"/>
    </ligand>
</feature>
<feature type="binding site" evidence="1">
    <location>
        <position position="178"/>
    </location>
    <ligand>
        <name>FAD</name>
        <dbReference type="ChEBI" id="CHEBI:57692"/>
    </ligand>
</feature>
<feature type="binding site" evidence="1">
    <location>
        <begin position="271"/>
        <end position="285"/>
    </location>
    <ligand>
        <name>NAD(+)</name>
        <dbReference type="ChEBI" id="CHEBI:57540"/>
    </ligand>
</feature>
<feature type="binding site" evidence="1">
    <location>
        <position position="368"/>
    </location>
    <ligand>
        <name>FAD</name>
        <dbReference type="ChEBI" id="CHEBI:57692"/>
    </ligand>
</feature>
<evidence type="ECO:0000255" key="1">
    <source>
        <dbReference type="HAMAP-Rule" id="MF_00129"/>
    </source>
</evidence>
<name>MNMG_BACFN</name>
<reference key="1">
    <citation type="journal article" date="2005" name="Science">
        <title>Extensive DNA inversions in the B. fragilis genome control variable gene expression.</title>
        <authorList>
            <person name="Cerdeno-Tarraga A.-M."/>
            <person name="Patrick S."/>
            <person name="Crossman L.C."/>
            <person name="Blakely G."/>
            <person name="Abratt V."/>
            <person name="Lennard N."/>
            <person name="Poxton I."/>
            <person name="Duerden B."/>
            <person name="Harris B."/>
            <person name="Quail M.A."/>
            <person name="Barron A."/>
            <person name="Clark L."/>
            <person name="Corton C."/>
            <person name="Doggett J."/>
            <person name="Holden M.T.G."/>
            <person name="Larke N."/>
            <person name="Line A."/>
            <person name="Lord A."/>
            <person name="Norbertczak H."/>
            <person name="Ormond D."/>
            <person name="Price C."/>
            <person name="Rabbinowitsch E."/>
            <person name="Woodward J."/>
            <person name="Barrell B.G."/>
            <person name="Parkhill J."/>
        </authorList>
    </citation>
    <scope>NUCLEOTIDE SEQUENCE [LARGE SCALE GENOMIC DNA]</scope>
    <source>
        <strain>ATCC 25285 / DSM 2151 / CCUG 4856 / JCM 11019 / LMG 10263 / NCTC 9343 / Onslow / VPI 2553 / EN-2</strain>
    </source>
</reference>
<proteinExistence type="inferred from homology"/>
<sequence length="625" mass="70191">MDFKYDVIVIGAGHAGCEAAAAAANLGSKTCLITMDMNKVAQMSCNPAVGGIAKGQIVREIDALGGYMGLVTDQTAIQFRILNRSKGPAMWSPRAQCDRNKFIWAWREILENIPNLHIWQDTVKEIIVENGEVVGLKTFWDVTFHARCIVLTAGTFLNGLMHVGKTQLPGGRMAEPASYKLTESIAEHGIEYGRMKTGTPVRIDGRSVHYELMDTQDGECDFHKFSFMNTSVRHLKQLQCWTCFTNEEAHNVLRNGLADSPLFNGQIQSIGPRYCPSIETKIVTFPDKEQHQLFLEPEGETTQELYLNGFSSSLPMEIQIEALKKIPAFKDLVIYRPGYAIEYDYFDPTQLKHTLESKKIKNLFFAGQVNGTTGYEEAGGQGIIAGINAHINCHGGEPFTLARDEAYIGVLIDDLVTKGVDEPYRMFTSRAEYRILLRMDDADMRLTERAYKLGLVKEDRYALLKSKREAVENIVNFTRNYSIKAALINDALENLGTTPLRQGCKLIDLINRPQITIENISEYVPAFKRELDKITDERKEEILEAAEILIKYEGYIGRERIIADKLARLESIKIKGKFDYDSLQSLSTEARQKLKKIDPETIAQASRIPGVSPSDINVLLVLSGR</sequence>
<gene>
    <name evidence="1" type="primary">mnmG</name>
    <name evidence="1" type="synonym">gidA</name>
    <name type="ordered locus">BF0113</name>
</gene>